<reference key="1">
    <citation type="submission" date="2006-08" db="EMBL/GenBank/DDBJ databases">
        <title>Positive selection in transcription factor genes on the human lineage.</title>
        <authorList>
            <person name="Nickel G.C."/>
            <person name="Tefft D.L."/>
            <person name="Trevarthen K."/>
            <person name="Funt J."/>
            <person name="Adams M.D."/>
        </authorList>
    </citation>
    <scope>NUCLEOTIDE SEQUENCE [GENOMIC DNA]</scope>
</reference>
<organism>
    <name type="scientific">Ateles geoffroyi</name>
    <name type="common">Black-handed spider monkey</name>
    <name type="synonym">Geoffroy's spider monkey</name>
    <dbReference type="NCBI Taxonomy" id="9509"/>
    <lineage>
        <taxon>Eukaryota</taxon>
        <taxon>Metazoa</taxon>
        <taxon>Chordata</taxon>
        <taxon>Craniata</taxon>
        <taxon>Vertebrata</taxon>
        <taxon>Euteleostomi</taxon>
        <taxon>Mammalia</taxon>
        <taxon>Eutheria</taxon>
        <taxon>Euarchontoglires</taxon>
        <taxon>Primates</taxon>
        <taxon>Haplorrhini</taxon>
        <taxon>Platyrrhini</taxon>
        <taxon>Atelidae</taxon>
        <taxon>Atelinae</taxon>
        <taxon>Ateles</taxon>
    </lineage>
</organism>
<sequence>MRALTLLALLALATLCITGQAGAKPSGAESSKGAAFVSKQEGSEVVKRPRRYLYQWLGAPAPYPDPLEPKREVCELNPDCDELADHIGFQEAYRRFYGPV</sequence>
<gene>
    <name type="primary">BGLAP</name>
</gene>
<proteinExistence type="inferred from homology"/>
<feature type="signal peptide" evidence="7">
    <location>
        <begin position="1"/>
        <end position="23"/>
    </location>
</feature>
<feature type="propeptide" id="PRO_0000285409" evidence="1">
    <location>
        <begin position="24"/>
        <end position="51"/>
    </location>
</feature>
<feature type="chain" id="PRO_0000285410" description="Osteocalcin">
    <location>
        <begin position="52"/>
        <end position="100"/>
    </location>
</feature>
<feature type="domain" description="Gla" evidence="6">
    <location>
        <begin position="52"/>
        <end position="98"/>
    </location>
</feature>
<feature type="binding site" evidence="3">
    <location>
        <position position="68"/>
    </location>
    <ligand>
        <name>Ca(2+)</name>
        <dbReference type="ChEBI" id="CHEBI:29108"/>
        <label>1</label>
    </ligand>
</feature>
<feature type="binding site" evidence="3">
    <location>
        <position position="72"/>
    </location>
    <ligand>
        <name>Ca(2+)</name>
        <dbReference type="ChEBI" id="CHEBI:29108"/>
        <label>2</label>
    </ligand>
</feature>
<feature type="binding site" evidence="3">
    <location>
        <position position="75"/>
    </location>
    <ligand>
        <name>Ca(2+)</name>
        <dbReference type="ChEBI" id="CHEBI:29108"/>
        <label>2</label>
    </ligand>
</feature>
<feature type="binding site" evidence="3">
    <location>
        <position position="75"/>
    </location>
    <ligand>
        <name>Ca(2+)</name>
        <dbReference type="ChEBI" id="CHEBI:29108"/>
        <label>3</label>
    </ligand>
</feature>
<feature type="binding site" evidence="3">
    <location>
        <position position="81"/>
    </location>
    <ligand>
        <name>Ca(2+)</name>
        <dbReference type="ChEBI" id="CHEBI:29108"/>
        <label>3</label>
    </ligand>
</feature>
<feature type="modified residue" description="4-carboxyglutamate" evidence="2 6">
    <location>
        <position position="68"/>
    </location>
</feature>
<feature type="modified residue" description="4-carboxyglutamate" evidence="4 6">
    <location>
        <position position="72"/>
    </location>
</feature>
<feature type="modified residue" description="4-carboxyglutamate" evidence="4 6">
    <location>
        <position position="75"/>
    </location>
</feature>
<feature type="disulfide bond" evidence="6">
    <location>
        <begin position="74"/>
        <end position="80"/>
    </location>
</feature>
<accession>A2D4U1</accession>
<name>OSTCN_ATEGE</name>
<keyword id="KW-0091">Biomineralization</keyword>
<keyword id="KW-0106">Calcium</keyword>
<keyword id="KW-0165">Cleavage on pair of basic residues</keyword>
<keyword id="KW-1015">Disulfide bond</keyword>
<keyword id="KW-0301">Gamma-carboxyglutamic acid</keyword>
<keyword id="KW-0372">Hormone</keyword>
<keyword id="KW-0479">Metal-binding</keyword>
<keyword id="KW-0964">Secreted</keyword>
<keyword id="KW-0732">Signal</keyword>
<evidence type="ECO:0000250" key="1"/>
<evidence type="ECO:0000250" key="2">
    <source>
        <dbReference type="UniProtKB" id="P02818"/>
    </source>
</evidence>
<evidence type="ECO:0000250" key="3">
    <source>
        <dbReference type="UniProtKB" id="P02820"/>
    </source>
</evidence>
<evidence type="ECO:0000250" key="4">
    <source>
        <dbReference type="UniProtKB" id="P83489"/>
    </source>
</evidence>
<evidence type="ECO:0000250" key="5">
    <source>
        <dbReference type="UniProtKB" id="P86546"/>
    </source>
</evidence>
<evidence type="ECO:0000255" key="6">
    <source>
        <dbReference type="PROSITE-ProRule" id="PRU00463"/>
    </source>
</evidence>
<evidence type="ECO:0000305" key="7"/>
<protein>
    <recommendedName>
        <fullName>Osteocalcin</fullName>
    </recommendedName>
    <alternativeName>
        <fullName>Bone Gla protein</fullName>
        <shortName>BGP</shortName>
    </alternativeName>
    <alternativeName>
        <fullName>Gamma-carboxyglutamic acid-containing protein</fullName>
    </alternativeName>
</protein>
<dbReference type="EMBL" id="DQ976615">
    <property type="protein sequence ID" value="ABM65938.1"/>
    <property type="molecule type" value="Genomic_DNA"/>
</dbReference>
<dbReference type="SMR" id="A2D4U1"/>
<dbReference type="OrthoDB" id="9950568at2759"/>
<dbReference type="GO" id="GO:0005737">
    <property type="term" value="C:cytoplasm"/>
    <property type="evidence" value="ECO:0000250"/>
    <property type="project" value="UniProtKB"/>
</dbReference>
<dbReference type="GO" id="GO:0005576">
    <property type="term" value="C:extracellular region"/>
    <property type="evidence" value="ECO:0007669"/>
    <property type="project" value="UniProtKB-SubCell"/>
</dbReference>
<dbReference type="GO" id="GO:0005509">
    <property type="term" value="F:calcium ion binding"/>
    <property type="evidence" value="ECO:0007669"/>
    <property type="project" value="InterPro"/>
</dbReference>
<dbReference type="GO" id="GO:0005179">
    <property type="term" value="F:hormone activity"/>
    <property type="evidence" value="ECO:0000250"/>
    <property type="project" value="UniProtKB"/>
</dbReference>
<dbReference type="GO" id="GO:0046848">
    <property type="term" value="F:hydroxyapatite binding"/>
    <property type="evidence" value="ECO:0007669"/>
    <property type="project" value="TreeGrafter"/>
</dbReference>
<dbReference type="GO" id="GO:0008147">
    <property type="term" value="F:structural constituent of bone"/>
    <property type="evidence" value="ECO:0000250"/>
    <property type="project" value="UniProtKB"/>
</dbReference>
<dbReference type="GO" id="GO:0031214">
    <property type="term" value="P:biomineral tissue development"/>
    <property type="evidence" value="ECO:0007669"/>
    <property type="project" value="UniProtKB-KW"/>
</dbReference>
<dbReference type="GO" id="GO:0060348">
    <property type="term" value="P:bone development"/>
    <property type="evidence" value="ECO:0007669"/>
    <property type="project" value="InterPro"/>
</dbReference>
<dbReference type="GO" id="GO:0007420">
    <property type="term" value="P:brain development"/>
    <property type="evidence" value="ECO:0000250"/>
    <property type="project" value="UniProtKB"/>
</dbReference>
<dbReference type="GO" id="GO:0032869">
    <property type="term" value="P:cellular response to insulin stimulus"/>
    <property type="evidence" value="ECO:0000250"/>
    <property type="project" value="UniProtKB"/>
</dbReference>
<dbReference type="GO" id="GO:0050890">
    <property type="term" value="P:cognition"/>
    <property type="evidence" value="ECO:0000250"/>
    <property type="project" value="UniProtKB"/>
</dbReference>
<dbReference type="GO" id="GO:0042593">
    <property type="term" value="P:glucose homeostasis"/>
    <property type="evidence" value="ECO:0000250"/>
    <property type="project" value="UniProtKB"/>
</dbReference>
<dbReference type="GO" id="GO:0007611">
    <property type="term" value="P:learning or memory"/>
    <property type="evidence" value="ECO:0000250"/>
    <property type="project" value="UniProtKB"/>
</dbReference>
<dbReference type="GO" id="GO:1903011">
    <property type="term" value="P:negative regulation of bone development"/>
    <property type="evidence" value="ECO:0000250"/>
    <property type="project" value="UniProtKB"/>
</dbReference>
<dbReference type="GO" id="GO:0001649">
    <property type="term" value="P:osteoblast differentiation"/>
    <property type="evidence" value="ECO:0007669"/>
    <property type="project" value="TreeGrafter"/>
</dbReference>
<dbReference type="GO" id="GO:0001956">
    <property type="term" value="P:positive regulation of neurotransmitter secretion"/>
    <property type="evidence" value="ECO:0000250"/>
    <property type="project" value="UniProtKB"/>
</dbReference>
<dbReference type="GO" id="GO:0030500">
    <property type="term" value="P:regulation of bone mineralization"/>
    <property type="evidence" value="ECO:0007669"/>
    <property type="project" value="InterPro"/>
</dbReference>
<dbReference type="GO" id="GO:1900076">
    <property type="term" value="P:regulation of cellular response to insulin stimulus"/>
    <property type="evidence" value="ECO:0007669"/>
    <property type="project" value="InterPro"/>
</dbReference>
<dbReference type="GO" id="GO:2000224">
    <property type="term" value="P:regulation of testosterone biosynthetic process"/>
    <property type="evidence" value="ECO:0000250"/>
    <property type="project" value="UniProtKB"/>
</dbReference>
<dbReference type="GO" id="GO:0032571">
    <property type="term" value="P:response to vitamin K"/>
    <property type="evidence" value="ECO:0007669"/>
    <property type="project" value="InterPro"/>
</dbReference>
<dbReference type="GO" id="GO:0044342">
    <property type="term" value="P:type B pancreatic cell proliferation"/>
    <property type="evidence" value="ECO:0000250"/>
    <property type="project" value="UniProtKB"/>
</dbReference>
<dbReference type="InterPro" id="IPR035972">
    <property type="entry name" value="GLA-like_dom_SF"/>
</dbReference>
<dbReference type="InterPro" id="IPR000294">
    <property type="entry name" value="GLA_domain"/>
</dbReference>
<dbReference type="InterPro" id="IPR039176">
    <property type="entry name" value="Osteocalcin"/>
</dbReference>
<dbReference type="InterPro" id="IPR002384">
    <property type="entry name" value="Osteocalcin/MGP"/>
</dbReference>
<dbReference type="PANTHER" id="PTHR14235">
    <property type="entry name" value="OSTEOCALCIN"/>
    <property type="match status" value="1"/>
</dbReference>
<dbReference type="PANTHER" id="PTHR14235:SF0">
    <property type="entry name" value="OSTEOCALCIN"/>
    <property type="match status" value="1"/>
</dbReference>
<dbReference type="PRINTS" id="PR00002">
    <property type="entry name" value="GLABONE"/>
</dbReference>
<dbReference type="SMART" id="SM00069">
    <property type="entry name" value="GLA"/>
    <property type="match status" value="1"/>
</dbReference>
<dbReference type="SUPFAM" id="SSF57630">
    <property type="entry name" value="GLA-domain"/>
    <property type="match status" value="1"/>
</dbReference>
<dbReference type="PROSITE" id="PS00011">
    <property type="entry name" value="GLA_1"/>
    <property type="match status" value="1"/>
</dbReference>
<dbReference type="PROSITE" id="PS50998">
    <property type="entry name" value="GLA_2"/>
    <property type="match status" value="1"/>
</dbReference>
<comment type="function">
    <text evidence="5">The carboxylated form is one of the main organic components of the bone matrix, which constitutes 1-2% of the total bone protein: it acts as a negative regulator of bone formation and is required to limit bone formation without impairing bone resorption or mineralization. The carboxylated form binds strongly to apatite and calcium.</text>
</comment>
<comment type="function">
    <text evidence="5">The uncarboxylated form acts as a hormone secreted by osteoblasts, which regulates different cellular processes, such as energy metabolism, male fertility and brain development. Regulates of energy metabolism by acting as a hormone favoring pancreatic beta-cell proliferation, insulin secretion and sensitivity and energy expenditure. Uncarboxylated osteocalcin hormone also promotes testosterone production in the testes: acts as a ligand for G protein-coupled receptor GPRC6A at the surface of Leydig cells, initiating a signaling response that promotes the expression of enzymes required for testosterone synthesis in a CREB-dependent manner. Also acts as a regulator of brain development: osteocalcin hormone crosses the blood-brain barrier and acts as a ligand for GPR158 on neurons, initiating a signaling response that prevents neuronal apoptosis in the hippocampus, favors the synthesis of all monoamine neurotransmitters and inhibits that of gamma-aminobutyric acid (GABA). Osteocalcin also crosses the placenta during pregnancy and maternal osteocalcin is required for fetal brain development.</text>
</comment>
<comment type="subcellular location">
    <subcellularLocation>
        <location evidence="5">Secreted</location>
    </subcellularLocation>
</comment>
<comment type="PTM">
    <text evidence="5 6">Gamma-carboxyglutamate residues are formed by vitamin K dependent carboxylation by GGCX. These residues are essential for the binding of calcium (By similarity). Decarboxylation promotes the hormone activity (By similarity).</text>
</comment>
<comment type="similarity">
    <text evidence="7">Belongs to the osteocalcin/matrix Gla protein family.</text>
</comment>